<evidence type="ECO:0000255" key="1">
    <source>
        <dbReference type="HAMAP-Rule" id="MF_00277"/>
    </source>
</evidence>
<evidence type="ECO:0000255" key="2">
    <source>
        <dbReference type="PROSITE-ProRule" id="PRU01175"/>
    </source>
</evidence>
<feature type="chain" id="PRO_0000231683" description="Bifunctional uridylyltransferase/uridylyl-removing enzyme">
    <location>
        <begin position="1"/>
        <end position="892"/>
    </location>
</feature>
<feature type="domain" description="HD" evidence="2">
    <location>
        <begin position="467"/>
        <end position="589"/>
    </location>
</feature>
<feature type="domain" description="ACT 1" evidence="1">
    <location>
        <begin position="711"/>
        <end position="786"/>
    </location>
</feature>
<feature type="domain" description="ACT 2" evidence="1">
    <location>
        <begin position="822"/>
        <end position="892"/>
    </location>
</feature>
<feature type="region of interest" description="Uridylyltransferase">
    <location>
        <begin position="1"/>
        <end position="348"/>
    </location>
</feature>
<feature type="region of interest" description="Uridylyl-removing">
    <location>
        <begin position="349"/>
        <end position="710"/>
    </location>
</feature>
<dbReference type="EC" id="2.7.7.59" evidence="1"/>
<dbReference type="EC" id="3.1.4.-" evidence="1"/>
<dbReference type="EMBL" id="CP000127">
    <property type="protein sequence ID" value="ABA57319.1"/>
    <property type="molecule type" value="Genomic_DNA"/>
</dbReference>
<dbReference type="RefSeq" id="WP_002811130.1">
    <property type="nucleotide sequence ID" value="NC_007484.1"/>
</dbReference>
<dbReference type="SMR" id="Q3JCX7"/>
<dbReference type="FunCoup" id="Q3JCX7">
    <property type="interactions" value="220"/>
</dbReference>
<dbReference type="STRING" id="323261.Noc_0806"/>
<dbReference type="KEGG" id="noc:Noc_0806"/>
<dbReference type="eggNOG" id="COG2844">
    <property type="taxonomic scope" value="Bacteria"/>
</dbReference>
<dbReference type="HOGENOM" id="CLU_012833_0_0_6"/>
<dbReference type="InParanoid" id="Q3JCX7"/>
<dbReference type="Proteomes" id="UP000006838">
    <property type="component" value="Chromosome"/>
</dbReference>
<dbReference type="GO" id="GO:0008773">
    <property type="term" value="F:[protein-PII] uridylyltransferase activity"/>
    <property type="evidence" value="ECO:0007669"/>
    <property type="project" value="UniProtKB-UniRule"/>
</dbReference>
<dbReference type="GO" id="GO:0008081">
    <property type="term" value="F:phosphoric diester hydrolase activity"/>
    <property type="evidence" value="ECO:0007669"/>
    <property type="project" value="UniProtKB-UniRule"/>
</dbReference>
<dbReference type="GO" id="GO:0006808">
    <property type="term" value="P:regulation of nitrogen utilization"/>
    <property type="evidence" value="ECO:0007669"/>
    <property type="project" value="UniProtKB-UniRule"/>
</dbReference>
<dbReference type="CDD" id="cd04899">
    <property type="entry name" value="ACT_ACR-UUR-like_2"/>
    <property type="match status" value="1"/>
</dbReference>
<dbReference type="CDD" id="cd04900">
    <property type="entry name" value="ACT_UUR-like_1"/>
    <property type="match status" value="1"/>
</dbReference>
<dbReference type="CDD" id="cd00077">
    <property type="entry name" value="HDc"/>
    <property type="match status" value="1"/>
</dbReference>
<dbReference type="CDD" id="cd05401">
    <property type="entry name" value="NT_GlnE_GlnD_like"/>
    <property type="match status" value="1"/>
</dbReference>
<dbReference type="FunFam" id="1.10.3090.10:FF:000005">
    <property type="entry name" value="Bifunctional uridylyltransferase/uridylyl-removing enzyme"/>
    <property type="match status" value="1"/>
</dbReference>
<dbReference type="Gene3D" id="3.30.460.10">
    <property type="entry name" value="Beta Polymerase, domain 2"/>
    <property type="match status" value="1"/>
</dbReference>
<dbReference type="Gene3D" id="1.10.3090.10">
    <property type="entry name" value="cca-adding enzyme, domain 2"/>
    <property type="match status" value="1"/>
</dbReference>
<dbReference type="HAMAP" id="MF_00277">
    <property type="entry name" value="PII_uridylyl_transf"/>
    <property type="match status" value="1"/>
</dbReference>
<dbReference type="InterPro" id="IPR045865">
    <property type="entry name" value="ACT-like_dom_sf"/>
</dbReference>
<dbReference type="InterPro" id="IPR002912">
    <property type="entry name" value="ACT_dom"/>
</dbReference>
<dbReference type="InterPro" id="IPR003607">
    <property type="entry name" value="HD/PDEase_dom"/>
</dbReference>
<dbReference type="InterPro" id="IPR006674">
    <property type="entry name" value="HD_domain"/>
</dbReference>
<dbReference type="InterPro" id="IPR043519">
    <property type="entry name" value="NT_sf"/>
</dbReference>
<dbReference type="InterPro" id="IPR013546">
    <property type="entry name" value="PII_UdlTrfase/GS_AdlTrfase"/>
</dbReference>
<dbReference type="InterPro" id="IPR002934">
    <property type="entry name" value="Polymerase_NTP_transf_dom"/>
</dbReference>
<dbReference type="InterPro" id="IPR010043">
    <property type="entry name" value="UTase/UR"/>
</dbReference>
<dbReference type="NCBIfam" id="TIGR01693">
    <property type="entry name" value="UTase_glnD"/>
    <property type="match status" value="1"/>
</dbReference>
<dbReference type="PANTHER" id="PTHR47320">
    <property type="entry name" value="BIFUNCTIONAL URIDYLYLTRANSFERASE/URIDYLYL-REMOVING ENZYME"/>
    <property type="match status" value="1"/>
</dbReference>
<dbReference type="PANTHER" id="PTHR47320:SF1">
    <property type="entry name" value="BIFUNCTIONAL URIDYLYLTRANSFERASE_URIDYLYL-REMOVING ENZYME"/>
    <property type="match status" value="1"/>
</dbReference>
<dbReference type="Pfam" id="PF08335">
    <property type="entry name" value="GlnD_UR_UTase"/>
    <property type="match status" value="1"/>
</dbReference>
<dbReference type="Pfam" id="PF01966">
    <property type="entry name" value="HD"/>
    <property type="match status" value="1"/>
</dbReference>
<dbReference type="Pfam" id="PF01909">
    <property type="entry name" value="NTP_transf_2"/>
    <property type="match status" value="1"/>
</dbReference>
<dbReference type="PIRSF" id="PIRSF006288">
    <property type="entry name" value="PII_uridyltransf"/>
    <property type="match status" value="1"/>
</dbReference>
<dbReference type="SMART" id="SM00471">
    <property type="entry name" value="HDc"/>
    <property type="match status" value="1"/>
</dbReference>
<dbReference type="SUPFAM" id="SSF55021">
    <property type="entry name" value="ACT-like"/>
    <property type="match status" value="1"/>
</dbReference>
<dbReference type="SUPFAM" id="SSF81301">
    <property type="entry name" value="Nucleotidyltransferase"/>
    <property type="match status" value="1"/>
</dbReference>
<dbReference type="SUPFAM" id="SSF81593">
    <property type="entry name" value="Nucleotidyltransferase substrate binding subunit/domain"/>
    <property type="match status" value="1"/>
</dbReference>
<dbReference type="SUPFAM" id="SSF81891">
    <property type="entry name" value="Poly A polymerase C-terminal region-like"/>
    <property type="match status" value="1"/>
</dbReference>
<dbReference type="PROSITE" id="PS51671">
    <property type="entry name" value="ACT"/>
    <property type="match status" value="2"/>
</dbReference>
<dbReference type="PROSITE" id="PS51831">
    <property type="entry name" value="HD"/>
    <property type="match status" value="1"/>
</dbReference>
<protein>
    <recommendedName>
        <fullName evidence="1">Bifunctional uridylyltransferase/uridylyl-removing enzyme</fullName>
        <shortName evidence="1">UTase/UR</shortName>
    </recommendedName>
    <alternativeName>
        <fullName evidence="1">Bifunctional [protein-PII] modification enzyme</fullName>
    </alternativeName>
    <alternativeName>
        <fullName evidence="1">Bifunctional nitrogen sensor protein</fullName>
    </alternativeName>
    <domain>
        <recommendedName>
            <fullName evidence="1">[Protein-PII] uridylyltransferase</fullName>
            <shortName evidence="1">PII uridylyltransferase</shortName>
            <shortName evidence="1">UTase</shortName>
            <ecNumber evidence="1">2.7.7.59</ecNumber>
        </recommendedName>
    </domain>
    <domain>
        <recommendedName>
            <fullName evidence="1">[Protein-PII]-UMP uridylyl-removing enzyme</fullName>
            <shortName evidence="1">UR</shortName>
            <ecNumber evidence="1">3.1.4.-</ecNumber>
        </recommendedName>
    </domain>
</protein>
<reference key="1">
    <citation type="journal article" date="2006" name="Appl. Environ. Microbiol.">
        <title>Complete genome sequence of the marine, chemolithoautotrophic, ammonia-oxidizing bacterium Nitrosococcus oceani ATCC 19707.</title>
        <authorList>
            <person name="Klotz M.G."/>
            <person name="Arp D.J."/>
            <person name="Chain P.S.G."/>
            <person name="El-Sheikh A.F."/>
            <person name="Hauser L.J."/>
            <person name="Hommes N.G."/>
            <person name="Larimer F.W."/>
            <person name="Malfatti S.A."/>
            <person name="Norton J.M."/>
            <person name="Poret-Peterson A.T."/>
            <person name="Vergez L.M."/>
            <person name="Ward B.B."/>
        </authorList>
    </citation>
    <scope>NUCLEOTIDE SEQUENCE [LARGE SCALE GENOMIC DNA]</scope>
    <source>
        <strain>ATCC 19707 / BCRC 17464 / JCM 30415 / NCIMB 11848 / C-107</strain>
    </source>
</reference>
<name>GLND_NITOC</name>
<organism>
    <name type="scientific">Nitrosococcus oceani (strain ATCC 19707 / BCRC 17464 / JCM 30415 / NCIMB 11848 / C-107)</name>
    <dbReference type="NCBI Taxonomy" id="323261"/>
    <lineage>
        <taxon>Bacteria</taxon>
        <taxon>Pseudomonadati</taxon>
        <taxon>Pseudomonadota</taxon>
        <taxon>Gammaproteobacteria</taxon>
        <taxon>Chromatiales</taxon>
        <taxon>Chromatiaceae</taxon>
        <taxon>Nitrosococcus</taxon>
    </lineage>
</organism>
<proteinExistence type="inferred from homology"/>
<gene>
    <name evidence="1" type="primary">glnD</name>
    <name type="ordered locus">Noc_0806</name>
</gene>
<comment type="function">
    <text evidence="1">Modifies, by uridylylation and deuridylylation, the PII regulatory proteins (GlnB and homologs), in response to the nitrogen status of the cell that GlnD senses through the glutamine level. Under low glutamine levels, catalyzes the conversion of the PII proteins and UTP to PII-UMP and PPi, while under higher glutamine levels, GlnD hydrolyzes PII-UMP to PII and UMP (deuridylylation). Thus, controls uridylylation state and activity of the PII proteins, and plays an important role in the regulation of nitrogen assimilation and metabolism.</text>
</comment>
<comment type="catalytic activity">
    <reaction evidence="1">
        <text>[protein-PII]-L-tyrosine + UTP = [protein-PII]-uridylyl-L-tyrosine + diphosphate</text>
        <dbReference type="Rhea" id="RHEA:13673"/>
        <dbReference type="Rhea" id="RHEA-COMP:12147"/>
        <dbReference type="Rhea" id="RHEA-COMP:12148"/>
        <dbReference type="ChEBI" id="CHEBI:33019"/>
        <dbReference type="ChEBI" id="CHEBI:46398"/>
        <dbReference type="ChEBI" id="CHEBI:46858"/>
        <dbReference type="ChEBI" id="CHEBI:90602"/>
        <dbReference type="EC" id="2.7.7.59"/>
    </reaction>
</comment>
<comment type="catalytic activity">
    <reaction evidence="1">
        <text>[protein-PII]-uridylyl-L-tyrosine + H2O = [protein-PII]-L-tyrosine + UMP + H(+)</text>
        <dbReference type="Rhea" id="RHEA:48600"/>
        <dbReference type="Rhea" id="RHEA-COMP:12147"/>
        <dbReference type="Rhea" id="RHEA-COMP:12148"/>
        <dbReference type="ChEBI" id="CHEBI:15377"/>
        <dbReference type="ChEBI" id="CHEBI:15378"/>
        <dbReference type="ChEBI" id="CHEBI:46858"/>
        <dbReference type="ChEBI" id="CHEBI:57865"/>
        <dbReference type="ChEBI" id="CHEBI:90602"/>
    </reaction>
</comment>
<comment type="cofactor">
    <cofactor evidence="1">
        <name>Mg(2+)</name>
        <dbReference type="ChEBI" id="CHEBI:18420"/>
    </cofactor>
</comment>
<comment type="activity regulation">
    <text evidence="1">Uridylyltransferase (UTase) activity is inhibited by glutamine, while glutamine activates uridylyl-removing (UR) activity.</text>
</comment>
<comment type="domain">
    <text evidence="1">Has four distinct domains: an N-terminal nucleotidyltransferase (NT) domain responsible for UTase activity, a central HD domain that encodes UR activity, and two C-terminal ACT domains that seem to have a role in glutamine sensing.</text>
</comment>
<comment type="similarity">
    <text evidence="1">Belongs to the GlnD family.</text>
</comment>
<accession>Q3JCX7</accession>
<keyword id="KW-0378">Hydrolase</keyword>
<keyword id="KW-0460">Magnesium</keyword>
<keyword id="KW-0511">Multifunctional enzyme</keyword>
<keyword id="KW-0548">Nucleotidyltransferase</keyword>
<keyword id="KW-1185">Reference proteome</keyword>
<keyword id="KW-0677">Repeat</keyword>
<keyword id="KW-0808">Transferase</keyword>
<sequence length="892" mass="103332">MPNFTGNTRPDPTLFEPAAFAKWIDTSEAPLLLLRSFLKEGIENLKQRFLTGTSAAELLPLHAWLVDQILVQACRLHTKKCPERVALVAVGGYGRGTLHPYSDIDILLLLTEETDSILQNSIGHFISFLWDTGLEMGHSVRTVAECQQAARDDLSFITSLMEARLLFGPELLFKNLQTAIAPEQIWNSRQFFLAKQAEQITRHHKYHDTAYNLEPNLKEGPGGLRDIQMIQWVSKRYFNTWSFDSLLQHDFLTVSERKELLESQSFLWQLRYGLHTLTGRREDRLLFDHQIALAKQLGYHDQGPHLAVEQLMKDYYRTAENTGRLNEMLLQLLEERILLVDAKVHVRPINERFQARNGFLEVINPSVFKHTPSALLEVFLLLQQHPEIKGVRASTIRLIREHRHLIDDNFRADSFNRALFMEIMRQSRGITRELRRMNKYGILGAYLPVFGKIVGQMQYDMFHAYTVDEHTLFLIHNLRRFALPKYAQELPLCSEIFQRISKPELLYLAGLFHDIAKGRGGDHSKLGAKDALRFCLYHGLSRDDSRLVAWLVAHHLLMSMTAQRRDINDPKVIQRFAREVGDERRLNHLYLLTAADIRATNPNLWNSWKDALLNKLYTATQQALRQGLEYPVDKKEHIRDIQNEARQALLKDGWTEQKLDILWSQIDADYFLRHTPNEIRWHIKALAQKEPHDGAPRILVRIHNQEPGTMEVFIYARAHALIFTVTTRTMAQLDLDVLDARIITTGHGFVLESFVVREAATIRAEADLEFRLQEIQEVLTQRLTQPDRAPPYRPGFIPRKLKLFKFPTTITFTKDRRNQCTVMELTTNNWPGLLSRVCRALASCQVRLVNAKITTLGTQVVDVFFICNQQDKPLTPEQQQQLKEAIYTYLER</sequence>